<name>Y098_ARCFU</name>
<comment type="subcellular location">
    <subcellularLocation>
        <location evidence="2">Cell membrane</location>
        <topology evidence="2">Multi-pass membrane protein</topology>
    </subcellularLocation>
</comment>
<sequence>MDKMKGKKFLVFISFFIILLGILDLIMEFDHRSYIIILVGLASLFASLNISISRLAIAVCIAAAVFIEAIHVSNLHYRVILYAIGSLPLIISVGSYLKGSEKGRGMR</sequence>
<evidence type="ECO:0000255" key="1"/>
<evidence type="ECO:0000305" key="2"/>
<keyword id="KW-1003">Cell membrane</keyword>
<keyword id="KW-0472">Membrane</keyword>
<keyword id="KW-1185">Reference proteome</keyword>
<keyword id="KW-0812">Transmembrane</keyword>
<keyword id="KW-1133">Transmembrane helix</keyword>
<accession>O30138</accession>
<reference key="1">
    <citation type="journal article" date="1997" name="Nature">
        <title>The complete genome sequence of the hyperthermophilic, sulphate-reducing archaeon Archaeoglobus fulgidus.</title>
        <authorList>
            <person name="Klenk H.-P."/>
            <person name="Clayton R.A."/>
            <person name="Tomb J.-F."/>
            <person name="White O."/>
            <person name="Nelson K.E."/>
            <person name="Ketchum K.A."/>
            <person name="Dodson R.J."/>
            <person name="Gwinn M.L."/>
            <person name="Hickey E.K."/>
            <person name="Peterson J.D."/>
            <person name="Richardson D.L."/>
            <person name="Kerlavage A.R."/>
            <person name="Graham D.E."/>
            <person name="Kyrpides N.C."/>
            <person name="Fleischmann R.D."/>
            <person name="Quackenbush J."/>
            <person name="Lee N.H."/>
            <person name="Sutton G.G."/>
            <person name="Gill S.R."/>
            <person name="Kirkness E.F."/>
            <person name="Dougherty B.A."/>
            <person name="McKenney K."/>
            <person name="Adams M.D."/>
            <person name="Loftus B.J."/>
            <person name="Peterson S.N."/>
            <person name="Reich C.I."/>
            <person name="McNeil L.K."/>
            <person name="Badger J.H."/>
            <person name="Glodek A."/>
            <person name="Zhou L."/>
            <person name="Overbeek R."/>
            <person name="Gocayne J.D."/>
            <person name="Weidman J.F."/>
            <person name="McDonald L.A."/>
            <person name="Utterback T.R."/>
            <person name="Cotton M.D."/>
            <person name="Spriggs T."/>
            <person name="Artiach P."/>
            <person name="Kaine B.P."/>
            <person name="Sykes S.M."/>
            <person name="Sadow P.W."/>
            <person name="D'Andrea K.P."/>
            <person name="Bowman C."/>
            <person name="Fujii C."/>
            <person name="Garland S.A."/>
            <person name="Mason T.M."/>
            <person name="Olsen G.J."/>
            <person name="Fraser C.M."/>
            <person name="Smith H.O."/>
            <person name="Woese C.R."/>
            <person name="Venter J.C."/>
        </authorList>
    </citation>
    <scope>NUCLEOTIDE SEQUENCE [LARGE SCALE GENOMIC DNA]</scope>
    <source>
        <strain>ATCC 49558 / DSM 4304 / JCM 9628 / NBRC 100126 / VC-16</strain>
    </source>
</reference>
<dbReference type="EMBL" id="AE000782">
    <property type="protein sequence ID" value="AAB91132.1"/>
    <property type="molecule type" value="Genomic_DNA"/>
</dbReference>
<dbReference type="PIR" id="B69262">
    <property type="entry name" value="B69262"/>
</dbReference>
<dbReference type="SMR" id="O30138"/>
<dbReference type="STRING" id="224325.AF_0098"/>
<dbReference type="PaxDb" id="224325-AF_0098"/>
<dbReference type="EnsemblBacteria" id="AAB91132">
    <property type="protein sequence ID" value="AAB91132"/>
    <property type="gene ID" value="AF_0098"/>
</dbReference>
<dbReference type="KEGG" id="afu:AF_0098"/>
<dbReference type="HOGENOM" id="CLU_2243668_0_0_2"/>
<dbReference type="Proteomes" id="UP000002199">
    <property type="component" value="Chromosome"/>
</dbReference>
<dbReference type="GO" id="GO:0005886">
    <property type="term" value="C:plasma membrane"/>
    <property type="evidence" value="ECO:0007669"/>
    <property type="project" value="UniProtKB-SubCell"/>
</dbReference>
<gene>
    <name type="ordered locus">AF_0098</name>
</gene>
<protein>
    <recommendedName>
        <fullName>Uncharacterized protein AF_0098</fullName>
    </recommendedName>
</protein>
<proteinExistence type="predicted"/>
<organism>
    <name type="scientific">Archaeoglobus fulgidus (strain ATCC 49558 / DSM 4304 / JCM 9628 / NBRC 100126 / VC-16)</name>
    <dbReference type="NCBI Taxonomy" id="224325"/>
    <lineage>
        <taxon>Archaea</taxon>
        <taxon>Methanobacteriati</taxon>
        <taxon>Methanobacteriota</taxon>
        <taxon>Archaeoglobi</taxon>
        <taxon>Archaeoglobales</taxon>
        <taxon>Archaeoglobaceae</taxon>
        <taxon>Archaeoglobus</taxon>
    </lineage>
</organism>
<feature type="chain" id="PRO_0000127830" description="Uncharacterized protein AF_0098">
    <location>
        <begin position="1"/>
        <end position="107"/>
    </location>
</feature>
<feature type="transmembrane region" description="Helical" evidence="1">
    <location>
        <begin position="9"/>
        <end position="28"/>
    </location>
</feature>
<feature type="transmembrane region" description="Helical" evidence="1">
    <location>
        <begin position="33"/>
        <end position="50"/>
    </location>
</feature>
<feature type="transmembrane region" description="Helical" evidence="1">
    <location>
        <begin position="55"/>
        <end position="72"/>
    </location>
</feature>
<feature type="transmembrane region" description="Helical" evidence="1">
    <location>
        <begin position="77"/>
        <end position="99"/>
    </location>
</feature>